<name>DESI2_HUMAN</name>
<accession>Q9BSY9</accession>
<accession>B1APK6</accession>
<accession>Q5VVC6</accession>
<accession>Q9NYS2</accession>
<accession>Q9Y3E4</accession>
<dbReference type="EC" id="3.4.19.12" evidence="4"/>
<dbReference type="EC" id="3.1.2.22" evidence="5"/>
<dbReference type="EMBL" id="AF229834">
    <property type="protein sequence ID" value="AAF42919.1"/>
    <property type="status" value="ALT_INIT"/>
    <property type="molecule type" value="mRNA"/>
</dbReference>
<dbReference type="EMBL" id="AF151904">
    <property type="protein sequence ID" value="AAD34141.1"/>
    <property type="status" value="ALT_FRAME"/>
    <property type="molecule type" value="mRNA"/>
</dbReference>
<dbReference type="EMBL" id="AC099757">
    <property type="status" value="NOT_ANNOTATED_CDS"/>
    <property type="molecule type" value="Genomic_DNA"/>
</dbReference>
<dbReference type="EMBL" id="AL451007">
    <property type="status" value="NOT_ANNOTATED_CDS"/>
    <property type="molecule type" value="Genomic_DNA"/>
</dbReference>
<dbReference type="EMBL" id="CH471148">
    <property type="protein sequence ID" value="EAW77114.1"/>
    <property type="molecule type" value="Genomic_DNA"/>
</dbReference>
<dbReference type="EMBL" id="CH471148">
    <property type="protein sequence ID" value="EAW77116.1"/>
    <property type="molecule type" value="Genomic_DNA"/>
</dbReference>
<dbReference type="EMBL" id="BC004485">
    <property type="protein sequence ID" value="AAH04485.1"/>
    <property type="molecule type" value="mRNA"/>
</dbReference>
<dbReference type="CCDS" id="CCDS1626.1">
    <molecule id="Q9BSY9-1"/>
</dbReference>
<dbReference type="CCDS" id="CCDS73055.1">
    <molecule id="Q9BSY9-2"/>
</dbReference>
<dbReference type="RefSeq" id="NP_001284675.1">
    <molecule id="Q9BSY9-2"/>
    <property type="nucleotide sequence ID" value="NM_001297746.2"/>
</dbReference>
<dbReference type="RefSeq" id="NP_057160.2">
    <molecule id="Q9BSY9-1"/>
    <property type="nucleotide sequence ID" value="NM_016076.4"/>
</dbReference>
<dbReference type="SMR" id="Q9BSY9"/>
<dbReference type="BioGRID" id="119235">
    <property type="interactions" value="20"/>
</dbReference>
<dbReference type="FunCoup" id="Q9BSY9">
    <property type="interactions" value="1620"/>
</dbReference>
<dbReference type="IntAct" id="Q9BSY9">
    <property type="interactions" value="14"/>
</dbReference>
<dbReference type="STRING" id="9606.ENSP00000306528"/>
<dbReference type="MEROPS" id="C97.002"/>
<dbReference type="iPTMnet" id="Q9BSY9"/>
<dbReference type="PhosphoSitePlus" id="Q9BSY9"/>
<dbReference type="SwissPalm" id="Q9BSY9"/>
<dbReference type="BioMuta" id="DESI2"/>
<dbReference type="DMDM" id="51827943"/>
<dbReference type="jPOST" id="Q9BSY9"/>
<dbReference type="MassIVE" id="Q9BSY9"/>
<dbReference type="PaxDb" id="9606-ENSP00000306528"/>
<dbReference type="PeptideAtlas" id="Q9BSY9"/>
<dbReference type="ProteomicsDB" id="78934">
    <molecule id="Q9BSY9-1"/>
</dbReference>
<dbReference type="ProteomicsDB" id="78935">
    <molecule id="Q9BSY9-2"/>
</dbReference>
<dbReference type="Pumba" id="Q9BSY9"/>
<dbReference type="Antibodypedia" id="34714">
    <property type="antibodies" value="112 antibodies from 30 providers"/>
</dbReference>
<dbReference type="DNASU" id="51029"/>
<dbReference type="Ensembl" id="ENST00000263831.11">
    <molecule id="Q9BSY9-2"/>
    <property type="protein sequence ID" value="ENSP00000263831.7"/>
    <property type="gene ID" value="ENSG00000121644.19"/>
</dbReference>
<dbReference type="Ensembl" id="ENST00000302550.16">
    <molecule id="Q9BSY9-1"/>
    <property type="protein sequence ID" value="ENSP00000306528.11"/>
    <property type="gene ID" value="ENSG00000121644.19"/>
</dbReference>
<dbReference type="GeneID" id="51029"/>
<dbReference type="KEGG" id="hsa:51029"/>
<dbReference type="MANE-Select" id="ENST00000302550.16">
    <property type="protein sequence ID" value="ENSP00000306528.11"/>
    <property type="RefSeq nucleotide sequence ID" value="NM_016076.5"/>
    <property type="RefSeq protein sequence ID" value="NP_057160.2"/>
</dbReference>
<dbReference type="UCSC" id="uc001iao.4">
    <molecule id="Q9BSY9-1"/>
    <property type="organism name" value="human"/>
</dbReference>
<dbReference type="AGR" id="HGNC:24264"/>
<dbReference type="CTD" id="51029"/>
<dbReference type="DisGeNET" id="51029"/>
<dbReference type="GeneCards" id="DESI2"/>
<dbReference type="HGNC" id="HGNC:24264">
    <property type="gene designation" value="DESI2"/>
</dbReference>
<dbReference type="HPA" id="ENSG00000121644">
    <property type="expression patterns" value="Low tissue specificity"/>
</dbReference>
<dbReference type="MIM" id="614638">
    <property type="type" value="gene"/>
</dbReference>
<dbReference type="neXtProt" id="NX_Q9BSY9"/>
<dbReference type="OpenTargets" id="ENSG00000121644"/>
<dbReference type="PharmGKB" id="PA164724993"/>
<dbReference type="VEuPathDB" id="HostDB:ENSG00000121644"/>
<dbReference type="eggNOG" id="KOG0324">
    <property type="taxonomic scope" value="Eukaryota"/>
</dbReference>
<dbReference type="GeneTree" id="ENSGT00730000111005"/>
<dbReference type="HOGENOM" id="CLU_069001_5_1_1"/>
<dbReference type="InParanoid" id="Q9BSY9"/>
<dbReference type="OMA" id="VYWTKPG"/>
<dbReference type="OrthoDB" id="412286at2759"/>
<dbReference type="PAN-GO" id="Q9BSY9">
    <property type="GO annotations" value="2 GO annotations based on evolutionary models"/>
</dbReference>
<dbReference type="PhylomeDB" id="Q9BSY9"/>
<dbReference type="TreeFam" id="TF313188"/>
<dbReference type="PathwayCommons" id="Q9BSY9"/>
<dbReference type="SignaLink" id="Q9BSY9"/>
<dbReference type="BioGRID-ORCS" id="51029">
    <property type="hits" value="12 hits in 1148 CRISPR screens"/>
</dbReference>
<dbReference type="ChiTaRS" id="DESI2">
    <property type="organism name" value="human"/>
</dbReference>
<dbReference type="GenomeRNAi" id="51029"/>
<dbReference type="Pharos" id="Q9BSY9">
    <property type="development level" value="Tbio"/>
</dbReference>
<dbReference type="PRO" id="PR:Q9BSY9"/>
<dbReference type="Proteomes" id="UP000005640">
    <property type="component" value="Chromosome 1"/>
</dbReference>
<dbReference type="RNAct" id="Q9BSY9">
    <property type="molecule type" value="protein"/>
</dbReference>
<dbReference type="Bgee" id="ENSG00000121644">
    <property type="expression patterns" value="Expressed in secondary oocyte and 220 other cell types or tissues"/>
</dbReference>
<dbReference type="ExpressionAtlas" id="Q9BSY9">
    <property type="expression patterns" value="baseline and differential"/>
</dbReference>
<dbReference type="GO" id="GO:0005737">
    <property type="term" value="C:cytoplasm"/>
    <property type="evidence" value="ECO:0000250"/>
    <property type="project" value="UniProtKB"/>
</dbReference>
<dbReference type="GO" id="GO:0004843">
    <property type="term" value="F:cysteine-type deubiquitinase activity"/>
    <property type="evidence" value="ECO:0000314"/>
    <property type="project" value="FlyBase"/>
</dbReference>
<dbReference type="GO" id="GO:0101005">
    <property type="term" value="F:deubiquitinase activity"/>
    <property type="evidence" value="ECO:0000318"/>
    <property type="project" value="GO_Central"/>
</dbReference>
<dbReference type="GO" id="GO:1990380">
    <property type="term" value="F:K48-linked deubiquitinase activity"/>
    <property type="evidence" value="ECO:0000315"/>
    <property type="project" value="UniProtKB"/>
</dbReference>
<dbReference type="GO" id="GO:0061578">
    <property type="term" value="F:K63-linked deubiquitinase activity"/>
    <property type="evidence" value="ECO:0000315"/>
    <property type="project" value="UniProtKB"/>
</dbReference>
<dbReference type="GO" id="GO:0052816">
    <property type="term" value="F:long-chain fatty acyl-CoA hydrolase activity"/>
    <property type="evidence" value="ECO:0000314"/>
    <property type="project" value="UniProtKB"/>
</dbReference>
<dbReference type="GO" id="GO:0008474">
    <property type="term" value="F:palmitoyl-(protein) hydrolase activity"/>
    <property type="evidence" value="ECO:0007669"/>
    <property type="project" value="RHEA"/>
</dbReference>
<dbReference type="GO" id="GO:0006508">
    <property type="term" value="P:proteolysis"/>
    <property type="evidence" value="ECO:0007669"/>
    <property type="project" value="UniProtKB-KW"/>
</dbReference>
<dbReference type="FunFam" id="3.90.1720.30:FF:000001">
    <property type="entry name" value="desumoylating isopeptidase 2"/>
    <property type="match status" value="1"/>
</dbReference>
<dbReference type="Gene3D" id="3.90.1720.30">
    <property type="entry name" value="PPPDE domains"/>
    <property type="match status" value="1"/>
</dbReference>
<dbReference type="InterPro" id="IPR008580">
    <property type="entry name" value="PPPDE_dom"/>
</dbReference>
<dbReference type="InterPro" id="IPR042266">
    <property type="entry name" value="PPPDE_sf"/>
</dbReference>
<dbReference type="PANTHER" id="PTHR12378">
    <property type="entry name" value="DESUMOYLATING ISOPEPTIDASE"/>
    <property type="match status" value="1"/>
</dbReference>
<dbReference type="PANTHER" id="PTHR12378:SF6">
    <property type="entry name" value="DEUBIQUITINASE DESI2"/>
    <property type="match status" value="1"/>
</dbReference>
<dbReference type="Pfam" id="PF05903">
    <property type="entry name" value="Peptidase_C97"/>
    <property type="match status" value="1"/>
</dbReference>
<dbReference type="SMART" id="SM01179">
    <property type="entry name" value="DUF862"/>
    <property type="match status" value="1"/>
</dbReference>
<dbReference type="PROSITE" id="PS51858">
    <property type="entry name" value="PPPDE"/>
    <property type="match status" value="1"/>
</dbReference>
<proteinExistence type="evidence at protein level"/>
<organism>
    <name type="scientific">Homo sapiens</name>
    <name type="common">Human</name>
    <dbReference type="NCBI Taxonomy" id="9606"/>
    <lineage>
        <taxon>Eukaryota</taxon>
        <taxon>Metazoa</taxon>
        <taxon>Chordata</taxon>
        <taxon>Craniata</taxon>
        <taxon>Vertebrata</taxon>
        <taxon>Euteleostomi</taxon>
        <taxon>Mammalia</taxon>
        <taxon>Eutheria</taxon>
        <taxon>Euarchontoglires</taxon>
        <taxon>Primates</taxon>
        <taxon>Haplorrhini</taxon>
        <taxon>Catarrhini</taxon>
        <taxon>Hominidae</taxon>
        <taxon>Homo</taxon>
    </lineage>
</organism>
<evidence type="ECO:0000250" key="1">
    <source>
        <dbReference type="UniProtKB" id="Q9D291"/>
    </source>
</evidence>
<evidence type="ECO:0000255" key="2">
    <source>
        <dbReference type="PROSITE-ProRule" id="PRU01205"/>
    </source>
</evidence>
<evidence type="ECO:0000256" key="3">
    <source>
        <dbReference type="SAM" id="MobiDB-lite"/>
    </source>
</evidence>
<evidence type="ECO:0000269" key="4">
    <source>
    </source>
</evidence>
<evidence type="ECO:0000269" key="5">
    <source>
    </source>
</evidence>
<evidence type="ECO:0000303" key="6">
    <source>
    </source>
</evidence>
<evidence type="ECO:0000303" key="7">
    <source ref="1"/>
</evidence>
<evidence type="ECO:0000305" key="8"/>
<evidence type="ECO:0000305" key="9">
    <source>
    </source>
</evidence>
<keyword id="KW-0025">Alternative splicing</keyword>
<keyword id="KW-0963">Cytoplasm</keyword>
<keyword id="KW-0378">Hydrolase</keyword>
<keyword id="KW-0645">Protease</keyword>
<keyword id="KW-1267">Proteomics identification</keyword>
<keyword id="KW-1185">Reference proteome</keyword>
<keyword id="KW-0833">Ubl conjugation pathway</keyword>
<gene>
    <name type="primary">DESI2</name>
    <name type="synonym">C1orf121</name>
    <name type="synonym">FAM152A</name>
    <name evidence="6" type="synonym">PPPDE1</name>
    <name type="ORF">CGI-146</name>
    <name type="ORF">PNAS-4</name>
</gene>
<feature type="chain" id="PRO_0000221630" description="Deubiquitinase DESI2">
    <location>
        <begin position="1"/>
        <end position="194"/>
    </location>
</feature>
<feature type="domain" description="PPPDE" evidence="2">
    <location>
        <begin position="5"/>
        <end position="149"/>
    </location>
</feature>
<feature type="region of interest" description="Disordered" evidence="3">
    <location>
        <begin position="165"/>
        <end position="194"/>
    </location>
</feature>
<feature type="compositionally biased region" description="Low complexity" evidence="3">
    <location>
        <begin position="173"/>
        <end position="186"/>
    </location>
</feature>
<feature type="active site" evidence="2">
    <location>
        <position position="30"/>
    </location>
</feature>
<feature type="active site" evidence="2 4">
    <location>
        <position position="108"/>
    </location>
</feature>
<feature type="splice variant" id="VSP_011422" description="In isoform 2." evidence="7">
    <location>
        <begin position="39"/>
        <end position="71"/>
    </location>
</feature>
<feature type="mutagenesis site" description="Loss of deubiquitination activity." evidence="4">
    <original>C</original>
    <variation>S</variation>
    <location>
        <position position="108"/>
    </location>
</feature>
<feature type="sequence conflict" description="In Ref. 1; AAF42919." evidence="8" ref="1">
    <original>A</original>
    <variation>V</variation>
    <location>
        <position position="180"/>
    </location>
</feature>
<protein>
    <recommendedName>
        <fullName evidence="8">Deubiquitinase DESI2</fullName>
        <ecNumber evidence="4">3.4.19.12</ecNumber>
    </recommendedName>
    <alternativeName>
        <fullName>Desumoylating isopeptidase 2</fullName>
        <shortName>DeSI-2</shortName>
    </alternativeName>
    <alternativeName>
        <fullName evidence="6">PPPDE peptidase domain-containing protein 1</fullName>
    </alternativeName>
    <alternativeName>
        <fullName>Palmitoyl protein thioesterase DESI2</fullName>
        <ecNumber evidence="5">3.1.2.22</ecNumber>
    </alternativeName>
    <alternativeName>
        <fullName>Protein FAM152A</fullName>
    </alternativeName>
    <alternativeName>
        <fullName>S-depalmitoylase DESI2</fullName>
    </alternativeName>
</protein>
<sequence>MGANQLVVLNVYDMYWMNEYTSSIGIGVFHSGIEVYGREFAYGGHPYPFSGIFEISPGNASELGETFKFKEAVVLGSTDFLEDDIEKIVEELGKEYKGNAYHLMHKNCNHFSSALSEILCGKEIPRWINRLAYFSSCIPFLQSCLPKEWLTPAALQSSVSQELQDELEEAEDAAASASVASTAAGSRPGRHTKL</sequence>
<comment type="function">
    <text evidence="4 5">Has deubiquitinating activity towards 'Lys-48'- and 'Lys-63'-linked polyubiquitin chains. Deubiquitinates 'Lys-48'-linked polyubiquitination of RPS7 leading to its stabilization (PubMed:28483520). Exhibits palmitoyl protein thioesterase (S-depalmitoylation) activity towards synthetic substrates 4-methylumbelliferyl-6-S-palmitoyl-beta-D-glucopyranoside and S-depalmitoylation probe 5 (DPP-5) (PubMed:35427157).</text>
</comment>
<comment type="catalytic activity">
    <reaction evidence="4">
        <text>Thiol-dependent hydrolysis of ester, thioester, amide, peptide and isopeptide bonds formed by the C-terminal Gly of ubiquitin (a 76-residue protein attached to proteins as an intracellular targeting signal).</text>
        <dbReference type="EC" id="3.4.19.12"/>
    </reaction>
</comment>
<comment type="catalytic activity">
    <reaction evidence="5">
        <text>S-hexadecanoyl-L-cysteinyl-[protein] + H2O = L-cysteinyl-[protein] + hexadecanoate + H(+)</text>
        <dbReference type="Rhea" id="RHEA:19233"/>
        <dbReference type="Rhea" id="RHEA-COMP:10131"/>
        <dbReference type="Rhea" id="RHEA-COMP:11032"/>
        <dbReference type="ChEBI" id="CHEBI:7896"/>
        <dbReference type="ChEBI" id="CHEBI:15377"/>
        <dbReference type="ChEBI" id="CHEBI:15378"/>
        <dbReference type="ChEBI" id="CHEBI:29950"/>
        <dbReference type="ChEBI" id="CHEBI:74151"/>
        <dbReference type="EC" id="3.1.2.22"/>
    </reaction>
    <physiologicalReaction direction="left-to-right" evidence="9">
        <dbReference type="Rhea" id="RHEA:19234"/>
    </physiologicalReaction>
</comment>
<comment type="activity regulation">
    <text evidence="5">Palmostatin B inhibits its palmitoyl protein thioesterase activity.</text>
</comment>
<comment type="subunit">
    <text evidence="4">Interacts with RPS7.</text>
</comment>
<comment type="interaction">
    <interactant intactId="EBI-12878374">
        <id>Q9BSY9</id>
    </interactant>
    <interactant intactId="EBI-2808808">
        <id>P53367</id>
        <label>ARFIP1</label>
    </interactant>
    <organismsDiffer>false</organismsDiffer>
    <experiments>3</experiments>
</comment>
<comment type="interaction">
    <interactant intactId="EBI-12878374">
        <id>Q9BSY9</id>
    </interactant>
    <interactant intactId="EBI-752094">
        <id>Q12982</id>
        <label>BNIP2</label>
    </interactant>
    <organismsDiffer>false</organismsDiffer>
    <experiments>3</experiments>
</comment>
<comment type="interaction">
    <interactant intactId="EBI-12878374">
        <id>Q9BSY9</id>
    </interactant>
    <interactant intactId="EBI-745535">
        <id>Q8NI60</id>
        <label>COQ8A</label>
    </interactant>
    <organismsDiffer>false</organismsDiffer>
    <experiments>3</experiments>
</comment>
<comment type="interaction">
    <interactant intactId="EBI-12878374">
        <id>Q9BSY9</id>
    </interactant>
    <interactant intactId="EBI-709754">
        <id>Q9HB07</id>
        <label>MYG1</label>
    </interactant>
    <organismsDiffer>false</organismsDiffer>
    <experiments>3</experiments>
</comment>
<comment type="interaction">
    <interactant intactId="EBI-12878374">
        <id>Q9BSY9</id>
    </interactant>
    <interactant intactId="EBI-725252">
        <id>Q9UMS0</id>
        <label>NFU1</label>
    </interactant>
    <organismsDiffer>false</organismsDiffer>
    <experiments>3</experiments>
</comment>
<comment type="interaction">
    <interactant intactId="EBI-12878374">
        <id>Q9BSY9</id>
    </interactant>
    <interactant intactId="EBI-741171">
        <id>Q96AL5</id>
        <label>PBX3</label>
    </interactant>
    <organismsDiffer>false</organismsDiffer>
    <experiments>3</experiments>
</comment>
<comment type="interaction">
    <interactant intactId="EBI-12878374">
        <id>Q9BSY9</id>
    </interactant>
    <interactant intactId="EBI-2115275">
        <id>Q99541</id>
        <label>PLIN2</label>
    </interactant>
    <organismsDiffer>false</organismsDiffer>
    <experiments>3</experiments>
</comment>
<comment type="interaction">
    <interactant intactId="EBI-12878374">
        <id>Q9BSY9</id>
    </interactant>
    <interactant intactId="EBI-17574989">
        <id>Q9NS98</id>
        <label>SEMA3G</label>
    </interactant>
    <organismsDiffer>false</organismsDiffer>
    <experiments>3</experiments>
</comment>
<comment type="interaction">
    <interactant intactId="EBI-12878374">
        <id>Q9BSY9</id>
    </interactant>
    <interactant intactId="EBI-2623095">
        <id>Q9Y371</id>
        <label>SH3GLB1</label>
    </interactant>
    <organismsDiffer>false</organismsDiffer>
    <experiments>3</experiments>
</comment>
<comment type="interaction">
    <interactant intactId="EBI-12878374">
        <id>Q9BSY9</id>
    </interactant>
    <interactant intactId="EBI-2643803">
        <id>Q8N0X7</id>
        <label>SPART</label>
    </interactant>
    <organismsDiffer>false</organismsDiffer>
    <experiments>3</experiments>
</comment>
<comment type="interaction">
    <interactant intactId="EBI-12878374">
        <id>Q9BSY9</id>
    </interactant>
    <interactant intactId="EBI-741350">
        <id>Q9BT49</id>
        <label>THAP7</label>
    </interactant>
    <organismsDiffer>false</organismsDiffer>
    <experiments>3</experiments>
</comment>
<comment type="subcellular location">
    <subcellularLocation>
        <location evidence="1">Cytoplasm</location>
    </subcellularLocation>
</comment>
<comment type="alternative products">
    <event type="alternative splicing"/>
    <isoform>
        <id>Q9BSY9-1</id>
        <name>1</name>
        <sequence type="displayed"/>
    </isoform>
    <isoform>
        <id>Q9BSY9-2</id>
        <name>2</name>
        <sequence type="described" ref="VSP_011422"/>
    </isoform>
</comment>
<comment type="similarity">
    <text evidence="8">Belongs to the DeSI family.</text>
</comment>
<comment type="sequence caution" evidence="8">
    <conflict type="frameshift">
        <sequence resource="EMBL-CDS" id="AAD34141"/>
    </conflict>
</comment>
<comment type="sequence caution" evidence="8">
    <conflict type="erroneous initiation">
        <sequence resource="EMBL-CDS" id="AAF42919"/>
    </conflict>
    <text>Extended N-terminus.</text>
</comment>
<reference key="1">
    <citation type="submission" date="2000-02" db="EMBL/GenBank/DDBJ databases">
        <title>Human acute promyelocytic leukemia cell line NB4's apoptosis related genes.</title>
        <authorList>
            <person name="Yu W.-Q."/>
            <person name="Sun B.-Z."/>
            <person name="Chai Y.-B."/>
            <person name="Zhu F."/>
            <person name="Liu X.-S."/>
            <person name="Li Z."/>
            <person name="Lu F."/>
            <person name="Yan W."/>
            <person name="Yang H."/>
            <person name="Zhao Z.-L."/>
        </authorList>
    </citation>
    <scope>NUCLEOTIDE SEQUENCE [LARGE SCALE MRNA] (ISOFORM 2)</scope>
    <source>
        <tissue>Promyelocytic leukemia</tissue>
    </source>
</reference>
<reference key="2">
    <citation type="journal article" date="2000" name="Genome Res.">
        <title>Identification of novel human genes evolutionarily conserved in Caenorhabditis elegans by comparative proteomics.</title>
        <authorList>
            <person name="Lai C.-H."/>
            <person name="Chou C.-Y."/>
            <person name="Ch'ang L.-Y."/>
            <person name="Liu C.-S."/>
            <person name="Lin W.-C."/>
        </authorList>
    </citation>
    <scope>NUCLEOTIDE SEQUENCE [LARGE SCALE MRNA] (ISOFORM 1)</scope>
</reference>
<reference key="3">
    <citation type="journal article" date="2006" name="Nature">
        <title>The DNA sequence and biological annotation of human chromosome 1.</title>
        <authorList>
            <person name="Gregory S.G."/>
            <person name="Barlow K.F."/>
            <person name="McLay K.E."/>
            <person name="Kaul R."/>
            <person name="Swarbreck D."/>
            <person name="Dunham A."/>
            <person name="Scott C.E."/>
            <person name="Howe K.L."/>
            <person name="Woodfine K."/>
            <person name="Spencer C.C.A."/>
            <person name="Jones M.C."/>
            <person name="Gillson C."/>
            <person name="Searle S."/>
            <person name="Zhou Y."/>
            <person name="Kokocinski F."/>
            <person name="McDonald L."/>
            <person name="Evans R."/>
            <person name="Phillips K."/>
            <person name="Atkinson A."/>
            <person name="Cooper R."/>
            <person name="Jones C."/>
            <person name="Hall R.E."/>
            <person name="Andrews T.D."/>
            <person name="Lloyd C."/>
            <person name="Ainscough R."/>
            <person name="Almeida J.P."/>
            <person name="Ambrose K.D."/>
            <person name="Anderson F."/>
            <person name="Andrew R.W."/>
            <person name="Ashwell R.I.S."/>
            <person name="Aubin K."/>
            <person name="Babbage A.K."/>
            <person name="Bagguley C.L."/>
            <person name="Bailey J."/>
            <person name="Beasley H."/>
            <person name="Bethel G."/>
            <person name="Bird C.P."/>
            <person name="Bray-Allen S."/>
            <person name="Brown J.Y."/>
            <person name="Brown A.J."/>
            <person name="Buckley D."/>
            <person name="Burton J."/>
            <person name="Bye J."/>
            <person name="Carder C."/>
            <person name="Chapman J.C."/>
            <person name="Clark S.Y."/>
            <person name="Clarke G."/>
            <person name="Clee C."/>
            <person name="Cobley V."/>
            <person name="Collier R.E."/>
            <person name="Corby N."/>
            <person name="Coville G.J."/>
            <person name="Davies J."/>
            <person name="Deadman R."/>
            <person name="Dunn M."/>
            <person name="Earthrowl M."/>
            <person name="Ellington A.G."/>
            <person name="Errington H."/>
            <person name="Frankish A."/>
            <person name="Frankland J."/>
            <person name="French L."/>
            <person name="Garner P."/>
            <person name="Garnett J."/>
            <person name="Gay L."/>
            <person name="Ghori M.R.J."/>
            <person name="Gibson R."/>
            <person name="Gilby L.M."/>
            <person name="Gillett W."/>
            <person name="Glithero R.J."/>
            <person name="Grafham D.V."/>
            <person name="Griffiths C."/>
            <person name="Griffiths-Jones S."/>
            <person name="Grocock R."/>
            <person name="Hammond S."/>
            <person name="Harrison E.S.I."/>
            <person name="Hart E."/>
            <person name="Haugen E."/>
            <person name="Heath P.D."/>
            <person name="Holmes S."/>
            <person name="Holt K."/>
            <person name="Howden P.J."/>
            <person name="Hunt A.R."/>
            <person name="Hunt S.E."/>
            <person name="Hunter G."/>
            <person name="Isherwood J."/>
            <person name="James R."/>
            <person name="Johnson C."/>
            <person name="Johnson D."/>
            <person name="Joy A."/>
            <person name="Kay M."/>
            <person name="Kershaw J.K."/>
            <person name="Kibukawa M."/>
            <person name="Kimberley A.M."/>
            <person name="King A."/>
            <person name="Knights A.J."/>
            <person name="Lad H."/>
            <person name="Laird G."/>
            <person name="Lawlor S."/>
            <person name="Leongamornlert D.A."/>
            <person name="Lloyd D.M."/>
            <person name="Loveland J."/>
            <person name="Lovell J."/>
            <person name="Lush M.J."/>
            <person name="Lyne R."/>
            <person name="Martin S."/>
            <person name="Mashreghi-Mohammadi M."/>
            <person name="Matthews L."/>
            <person name="Matthews N.S.W."/>
            <person name="McLaren S."/>
            <person name="Milne S."/>
            <person name="Mistry S."/>
            <person name="Moore M.J.F."/>
            <person name="Nickerson T."/>
            <person name="O'Dell C.N."/>
            <person name="Oliver K."/>
            <person name="Palmeiri A."/>
            <person name="Palmer S.A."/>
            <person name="Parker A."/>
            <person name="Patel D."/>
            <person name="Pearce A.V."/>
            <person name="Peck A.I."/>
            <person name="Pelan S."/>
            <person name="Phelps K."/>
            <person name="Phillimore B.J."/>
            <person name="Plumb R."/>
            <person name="Rajan J."/>
            <person name="Raymond C."/>
            <person name="Rouse G."/>
            <person name="Saenphimmachak C."/>
            <person name="Sehra H.K."/>
            <person name="Sheridan E."/>
            <person name="Shownkeen R."/>
            <person name="Sims S."/>
            <person name="Skuce C.D."/>
            <person name="Smith M."/>
            <person name="Steward C."/>
            <person name="Subramanian S."/>
            <person name="Sycamore N."/>
            <person name="Tracey A."/>
            <person name="Tromans A."/>
            <person name="Van Helmond Z."/>
            <person name="Wall M."/>
            <person name="Wallis J.M."/>
            <person name="White S."/>
            <person name="Whitehead S.L."/>
            <person name="Wilkinson J.E."/>
            <person name="Willey D.L."/>
            <person name="Williams H."/>
            <person name="Wilming L."/>
            <person name="Wray P.W."/>
            <person name="Wu Z."/>
            <person name="Coulson A."/>
            <person name="Vaudin M."/>
            <person name="Sulston J.E."/>
            <person name="Durbin R.M."/>
            <person name="Hubbard T."/>
            <person name="Wooster R."/>
            <person name="Dunham I."/>
            <person name="Carter N.P."/>
            <person name="McVean G."/>
            <person name="Ross M.T."/>
            <person name="Harrow J."/>
            <person name="Olson M.V."/>
            <person name="Beck S."/>
            <person name="Rogers J."/>
            <person name="Bentley D.R."/>
        </authorList>
    </citation>
    <scope>NUCLEOTIDE SEQUENCE [LARGE SCALE GENOMIC DNA]</scope>
</reference>
<reference key="4">
    <citation type="submission" date="2005-07" db="EMBL/GenBank/DDBJ databases">
        <authorList>
            <person name="Mural R.J."/>
            <person name="Istrail S."/>
            <person name="Sutton G.G."/>
            <person name="Florea L."/>
            <person name="Halpern A.L."/>
            <person name="Mobarry C.M."/>
            <person name="Lippert R."/>
            <person name="Walenz B."/>
            <person name="Shatkay H."/>
            <person name="Dew I."/>
            <person name="Miller J.R."/>
            <person name="Flanigan M.J."/>
            <person name="Edwards N.J."/>
            <person name="Bolanos R."/>
            <person name="Fasulo D."/>
            <person name="Halldorsson B.V."/>
            <person name="Hannenhalli S."/>
            <person name="Turner R."/>
            <person name="Yooseph S."/>
            <person name="Lu F."/>
            <person name="Nusskern D.R."/>
            <person name="Shue B.C."/>
            <person name="Zheng X.H."/>
            <person name="Zhong F."/>
            <person name="Delcher A.L."/>
            <person name="Huson D.H."/>
            <person name="Kravitz S.A."/>
            <person name="Mouchard L."/>
            <person name="Reinert K."/>
            <person name="Remington K.A."/>
            <person name="Clark A.G."/>
            <person name="Waterman M.S."/>
            <person name="Eichler E.E."/>
            <person name="Adams M.D."/>
            <person name="Hunkapiller M.W."/>
            <person name="Myers E.W."/>
            <person name="Venter J.C."/>
        </authorList>
    </citation>
    <scope>NUCLEOTIDE SEQUENCE [LARGE SCALE GENOMIC DNA]</scope>
</reference>
<reference key="5">
    <citation type="journal article" date="2004" name="Genome Res.">
        <title>The status, quality, and expansion of the NIH full-length cDNA project: the Mammalian Gene Collection (MGC).</title>
        <authorList>
            <consortium name="The MGC Project Team"/>
        </authorList>
    </citation>
    <scope>NUCLEOTIDE SEQUENCE [LARGE SCALE MRNA] (ISOFORM 1)</scope>
    <source>
        <tissue>Skin</tissue>
    </source>
</reference>
<reference key="6">
    <citation type="journal article" date="2011" name="BMC Syst. Biol.">
        <title>Initial characterization of the human central proteome.</title>
        <authorList>
            <person name="Burkard T.R."/>
            <person name="Planyavsky M."/>
            <person name="Kaupe I."/>
            <person name="Breitwieser F.P."/>
            <person name="Buerckstuemmer T."/>
            <person name="Bennett K.L."/>
            <person name="Superti-Furga G."/>
            <person name="Colinge J."/>
        </authorList>
    </citation>
    <scope>IDENTIFICATION BY MASS SPECTROMETRY [LARGE SCALE ANALYSIS]</scope>
</reference>
<reference key="7">
    <citation type="journal article" date="2017" name="Biochem. Biophys. Res. Commun.">
        <title>PPPDE1 is a novel deubiquitinase belonging to a cysteine isopeptidase family.</title>
        <authorList>
            <person name="Xie X."/>
            <person name="Wang X."/>
            <person name="Jiang D."/>
            <person name="Wang J."/>
            <person name="Fei R."/>
            <person name="Cong X."/>
            <person name="Wei L."/>
            <person name="Wang Y."/>
            <person name="Chen H."/>
        </authorList>
    </citation>
    <scope>MUTAGENESIS OF CYS-108</scope>
    <scope>INTERACTION WITH RPS7</scope>
    <scope>FUNCTION</scope>
    <scope>ACTIVE SITE</scope>
    <scope>CATALYTIC ACTIVITY</scope>
</reference>
<reference key="8">
    <citation type="journal article" date="2022" name="Sci. Adv.">
        <title>Cln5 represents a new type of cysteine-based S-depalmitoylase linked to neurodegeneration.</title>
        <authorList>
            <person name="Luebben A.V."/>
            <person name="Bender D."/>
            <person name="Becker S."/>
            <person name="Crowther L.M."/>
            <person name="Erven I."/>
            <person name="Hofmann K."/>
            <person name="Soeding J."/>
            <person name="Klemp H."/>
            <person name="Bellotti C."/>
            <person name="Staeuble A."/>
            <person name="Qiu T."/>
            <person name="Kathayat R.S."/>
            <person name="Dickinson B.C."/>
            <person name="Gaertner J."/>
            <person name="Sheldrick G.M."/>
            <person name="Kraetzner R."/>
            <person name="Steinfeld R."/>
        </authorList>
    </citation>
    <scope>FUNCTION</scope>
    <scope>CATALYTIC ACTIVITY</scope>
    <scope>ACTIVITY REGULATION</scope>
</reference>